<dbReference type="EMBL" id="AB307684">
    <property type="protein sequence ID" value="BAF63642.1"/>
    <property type="molecule type" value="mRNA"/>
</dbReference>
<dbReference type="EMBL" id="BC083401">
    <property type="protein sequence ID" value="AAH83401.1"/>
    <property type="molecule type" value="mRNA"/>
</dbReference>
<dbReference type="RefSeq" id="NP_001007061.2">
    <property type="nucleotide sequence ID" value="NM_001007060.2"/>
</dbReference>
<dbReference type="RefSeq" id="XP_005155630.1">
    <property type="nucleotide sequence ID" value="XM_005155573.5"/>
</dbReference>
<dbReference type="SMR" id="Q5XJA3"/>
<dbReference type="FunCoup" id="Q5XJA3">
    <property type="interactions" value="1071"/>
</dbReference>
<dbReference type="STRING" id="7955.ENSDARP00000065044"/>
<dbReference type="PaxDb" id="7955-ENSDARP00000065044"/>
<dbReference type="Ensembl" id="ENSDART00000065045">
    <property type="protein sequence ID" value="ENSDARP00000065044"/>
    <property type="gene ID" value="ENSDARG00000044304"/>
</dbReference>
<dbReference type="Ensembl" id="ENSDART00000175513">
    <property type="protein sequence ID" value="ENSDARP00000144236"/>
    <property type="gene ID" value="ENSDARG00000044304"/>
</dbReference>
<dbReference type="GeneID" id="474330"/>
<dbReference type="KEGG" id="dre:474330"/>
<dbReference type="AGR" id="ZFIN:ZDB-GENE-041024-9"/>
<dbReference type="CTD" id="133619"/>
<dbReference type="ZFIN" id="ZDB-GENE-041024-9">
    <property type="gene designation" value="prrc1"/>
</dbReference>
<dbReference type="eggNOG" id="ENOG502QUZV">
    <property type="taxonomic scope" value="Eukaryota"/>
</dbReference>
<dbReference type="HOGENOM" id="CLU_041959_0_0_1"/>
<dbReference type="InParanoid" id="Q5XJA3"/>
<dbReference type="OMA" id="ELFPDQW"/>
<dbReference type="OrthoDB" id="4968544at2759"/>
<dbReference type="PhylomeDB" id="Q5XJA3"/>
<dbReference type="TreeFam" id="TF343676"/>
<dbReference type="PRO" id="PR:Q5XJA3"/>
<dbReference type="Proteomes" id="UP000000437">
    <property type="component" value="Chromosome 10"/>
</dbReference>
<dbReference type="Bgee" id="ENSDARG00000044304">
    <property type="expression patterns" value="Expressed in blastula and 32 other cell types or tissues"/>
</dbReference>
<dbReference type="ExpressionAtlas" id="Q5XJA3">
    <property type="expression patterns" value="baseline and differential"/>
</dbReference>
<dbReference type="GO" id="GO:0005737">
    <property type="term" value="C:cytoplasm"/>
    <property type="evidence" value="ECO:0000314"/>
    <property type="project" value="ZFIN"/>
</dbReference>
<dbReference type="GO" id="GO:0005794">
    <property type="term" value="C:Golgi apparatus"/>
    <property type="evidence" value="ECO:0000314"/>
    <property type="project" value="ZFIN"/>
</dbReference>
<dbReference type="GO" id="GO:0034237">
    <property type="term" value="F:protein kinase A regulatory subunit binding"/>
    <property type="evidence" value="ECO:0000314"/>
    <property type="project" value="ZFIN"/>
</dbReference>
<dbReference type="GO" id="GO:0010669">
    <property type="term" value="P:epithelial structure maintenance"/>
    <property type="evidence" value="ECO:0000315"/>
    <property type="project" value="ZFIN"/>
</dbReference>
<dbReference type="GO" id="GO:0001757">
    <property type="term" value="P:somite specification"/>
    <property type="evidence" value="ECO:0000315"/>
    <property type="project" value="ZFIN"/>
</dbReference>
<dbReference type="FunFam" id="3.90.950.10:FF:000006">
    <property type="entry name" value="PRRC1 isoform 1"/>
    <property type="match status" value="1"/>
</dbReference>
<dbReference type="Gene3D" id="3.90.950.10">
    <property type="match status" value="1"/>
</dbReference>
<dbReference type="InterPro" id="IPR029001">
    <property type="entry name" value="ITPase-like_fam"/>
</dbReference>
<dbReference type="InterPro" id="IPR026533">
    <property type="entry name" value="NTPase/PRRC1"/>
</dbReference>
<dbReference type="InterPro" id="IPR026534">
    <property type="entry name" value="PRRC1"/>
</dbReference>
<dbReference type="PANTHER" id="PTHR23276">
    <property type="entry name" value="PROTEIN PRRC1"/>
    <property type="match status" value="1"/>
</dbReference>
<dbReference type="PANTHER" id="PTHR23276:SF2">
    <property type="entry name" value="PROTEIN PRRC1"/>
    <property type="match status" value="1"/>
</dbReference>
<dbReference type="Pfam" id="PF01931">
    <property type="entry name" value="NTPase_I-T"/>
    <property type="match status" value="1"/>
</dbReference>
<dbReference type="SUPFAM" id="SSF52972">
    <property type="entry name" value="ITPase-like"/>
    <property type="match status" value="1"/>
</dbReference>
<keyword id="KW-0963">Cytoplasm</keyword>
<keyword id="KW-0333">Golgi apparatus</keyword>
<keyword id="KW-1185">Reference proteome</keyword>
<name>PRRC1_DANRE</name>
<accession>Q5XJA3</accession>
<accession>A5LID3</accession>
<evidence type="ECO:0000256" key="1">
    <source>
        <dbReference type="SAM" id="MobiDB-lite"/>
    </source>
</evidence>
<evidence type="ECO:0000269" key="2">
    <source>
    </source>
</evidence>
<evidence type="ECO:0000269" key="3">
    <source>
    </source>
</evidence>
<evidence type="ECO:0000303" key="4">
    <source>
    </source>
</evidence>
<evidence type="ECO:0000305" key="5"/>
<sequence length="435" mass="45390">MMEESGIESTPPATPPPPSTVVASPPPLTSGATRPQTVPSPSGISAFTPGDFSSPVPSVALTSTLPPMQSSVPPLPLSSISSPLGLSGPYGIPSASFASPAAGPPLSTGPPLGPVLSAPPMGPPTTGFSVSGGYDITRGHAGRTPQTPLMPSFSSASPMPGIVTNPMMQQPVSGGLDVSSPITFPEDVEDPRVTPDSNAPGGLWGFIKGVAGNPMVKTVLDKTKHSVESMITTLDPGMAPYIKSGGDVDIVVTSDKEVKVAAVRDAFQEVFGLAMVTGEAGQSNIAPQPVGYAAGVKGAQERIDSLRRAAVIHEKQPVVSVENFIAELFPDKWFDIGCLILDDPGYGIHIETFTQATPVALEHVQQAQSLTPPDYNLRWSGLLVTVGEVLERNVPNVSRTDWHQAFTGMSRRQMIYSAAKALAGMYKLRLPSRTV</sequence>
<proteinExistence type="evidence at protein level"/>
<comment type="function">
    <text evidence="2 3">Acts as a regulator of the protein kinase A (PKA) during embryonic development.</text>
</comment>
<comment type="subunit">
    <text evidence="3">Interacts with PRKAR1A; resulting in PKA activation.</text>
</comment>
<comment type="subcellular location">
    <subcellularLocation>
        <location evidence="3">Golgi apparatus</location>
    </subcellularLocation>
    <subcellularLocation>
        <location evidence="2 3">Cytoplasm</location>
    </subcellularLocation>
</comment>
<comment type="tissue specificity">
    <text evidence="3">Expressed in the brain, heart, testis and ovary.</text>
</comment>
<comment type="developmental stage">
    <text evidence="2">Expressed ubiquitously during embryonic development.</text>
</comment>
<comment type="disruption phenotype">
    <text evidence="2 3">Knockdown of prrc1 results in small eyes and severe somite defects in embryos.</text>
</comment>
<comment type="similarity">
    <text evidence="5">Belongs to the PRRC1 family.</text>
</comment>
<reference key="1">
    <citation type="journal article" date="2008" name="Dev. Biol.">
        <title>Misty somites, a maternal effect gene identified by transposon-mediated insertional mutagenesis in zebrafish that is essential for the somite boundary maintenance.</title>
        <authorList>
            <person name="Kotani T."/>
            <person name="Kawakami K."/>
        </authorList>
    </citation>
    <scope>NUCLEOTIDE SEQUENCE [MRNA]</scope>
    <scope>DISRUPTION PHENOTYPE</scope>
    <scope>SUBCELLULAR LOCATION</scope>
    <scope>FUNCTION</scope>
    <scope>DEVELOPMENTAL STAGE</scope>
</reference>
<reference key="2">
    <citation type="submission" date="2004-10" db="EMBL/GenBank/DDBJ databases">
        <authorList>
            <consortium name="NIH - Zebrafish Gene Collection (ZGC) project"/>
        </authorList>
    </citation>
    <scope>NUCLEOTIDE SEQUENCE [LARGE SCALE MRNA]</scope>
    <source>
        <tissue>Ovary</tissue>
    </source>
</reference>
<reference key="3">
    <citation type="journal article" date="2010" name="J. Biol. Chem.">
        <title>Mys protein regulates protein kinase A activity by interacting with regulatory type Ialpha subunit during vertebrate development.</title>
        <authorList>
            <person name="Kotani T."/>
            <person name="Iemura S."/>
            <person name="Natsume T."/>
            <person name="Kawakami K."/>
            <person name="Yamashita M."/>
        </authorList>
    </citation>
    <scope>SUBCELLULAR LOCATION</scope>
    <scope>TISSUE SPECIFICITY</scope>
    <scope>DISRUPTION PHENOTYPE</scope>
    <scope>FUNCTION</scope>
    <scope>INTERACTION WITH PRKAR1A</scope>
</reference>
<gene>
    <name type="primary">prrc1</name>
    <name evidence="4" type="synonym">mys</name>
    <name type="ORF">zgc:103484</name>
</gene>
<protein>
    <recommendedName>
        <fullName>Protein PRRC1</fullName>
    </recommendedName>
    <alternativeName>
        <fullName>Proline-rich and coiled-coil-containing protein 1</fullName>
    </alternativeName>
    <alternativeName>
        <fullName evidence="4">Protein misty somites</fullName>
    </alternativeName>
</protein>
<feature type="chain" id="PRO_0000307342" description="Protein PRRC1">
    <location>
        <begin position="1"/>
        <end position="435"/>
    </location>
</feature>
<feature type="region of interest" description="Disordered" evidence="1">
    <location>
        <begin position="1"/>
        <end position="54"/>
    </location>
</feature>
<feature type="region of interest" description="Disordered" evidence="1">
    <location>
        <begin position="101"/>
        <end position="165"/>
    </location>
</feature>
<feature type="region of interest" description="Required for interaction with PRKAR1A" evidence="3">
    <location>
        <begin position="296"/>
        <end position="389"/>
    </location>
</feature>
<feature type="compositionally biased region" description="Pro residues" evidence="1">
    <location>
        <begin position="12"/>
        <end position="28"/>
    </location>
</feature>
<feature type="compositionally biased region" description="Polar residues" evidence="1">
    <location>
        <begin position="30"/>
        <end position="45"/>
    </location>
</feature>
<feature type="compositionally biased region" description="Polar residues" evidence="1">
    <location>
        <begin position="144"/>
        <end position="157"/>
    </location>
</feature>
<feature type="sequence conflict" description="In Ref. 1; BAF63642." evidence="5" ref="1">
    <original>G</original>
    <variation>D</variation>
    <location>
        <position position="6"/>
    </location>
</feature>
<feature type="sequence conflict" description="In Ref. 2; AAH83401." evidence="5" ref="2">
    <original>E</original>
    <variation>K</variation>
    <location>
        <position position="8"/>
    </location>
</feature>
<feature type="sequence conflict" description="In Ref. 1; BAF63642." evidence="5" ref="1">
    <original>D</original>
    <variation>N</variation>
    <location>
        <position position="187"/>
    </location>
</feature>
<feature type="sequence conflict" description="In Ref. 1; BAF63642." evidence="5" ref="1">
    <original>F</original>
    <variation>S</variation>
    <location>
        <position position="353"/>
    </location>
</feature>
<organism>
    <name type="scientific">Danio rerio</name>
    <name type="common">Zebrafish</name>
    <name type="synonym">Brachydanio rerio</name>
    <dbReference type="NCBI Taxonomy" id="7955"/>
    <lineage>
        <taxon>Eukaryota</taxon>
        <taxon>Metazoa</taxon>
        <taxon>Chordata</taxon>
        <taxon>Craniata</taxon>
        <taxon>Vertebrata</taxon>
        <taxon>Euteleostomi</taxon>
        <taxon>Actinopterygii</taxon>
        <taxon>Neopterygii</taxon>
        <taxon>Teleostei</taxon>
        <taxon>Ostariophysi</taxon>
        <taxon>Cypriniformes</taxon>
        <taxon>Danionidae</taxon>
        <taxon>Danioninae</taxon>
        <taxon>Danio</taxon>
    </lineage>
</organism>